<gene>
    <name type="primary">pheS</name>
    <name type="ordered locus">b1714</name>
    <name type="ordered locus">JW5277</name>
</gene>
<keyword id="KW-0002">3D-structure</keyword>
<keyword id="KW-0030">Aminoacyl-tRNA synthetase</keyword>
<keyword id="KW-0067">ATP-binding</keyword>
<keyword id="KW-0963">Cytoplasm</keyword>
<keyword id="KW-0436">Ligase</keyword>
<keyword id="KW-0460">Magnesium</keyword>
<keyword id="KW-0479">Metal-binding</keyword>
<keyword id="KW-0547">Nucleotide-binding</keyword>
<keyword id="KW-0648">Protein biosynthesis</keyword>
<keyword id="KW-1185">Reference proteome</keyword>
<feature type="chain" id="PRO_0000126701" description="Phenylalanine--tRNA ligase alpha subunit">
    <location>
        <begin position="1"/>
        <end position="327"/>
    </location>
</feature>
<feature type="binding site" evidence="1">
    <location>
        <position position="252"/>
    </location>
    <ligand>
        <name>Mg(2+)</name>
        <dbReference type="ChEBI" id="CHEBI:18420"/>
        <note>shared with beta subunit</note>
    </ligand>
</feature>
<feature type="sequence variant" description="In thermosensitive mutant pheS5; might cause subunit disaggregation due to electrostatic repulsion." evidence="2">
    <original>G</original>
    <variation>D</variation>
    <location>
        <position position="98"/>
    </location>
</feature>
<feature type="sequence variant" description="Decreased affinity for Phe." evidence="3">
    <original>G</original>
    <variation>D</variation>
    <location>
        <position position="191"/>
    </location>
</feature>
<feature type="sequence conflict" description="In Ref. 2; CAA23564 and 4; AAA51469." evidence="4" ref="2 4">
    <original>R</original>
    <variation>A</variation>
    <location>
        <position position="74"/>
    </location>
</feature>
<feature type="helix" evidence="7">
    <location>
        <begin position="10"/>
        <end position="16"/>
    </location>
</feature>
<feature type="turn" evidence="7">
    <location>
        <begin position="17"/>
        <end position="20"/>
    </location>
</feature>
<feature type="helix" evidence="7">
    <location>
        <begin position="27"/>
        <end position="42"/>
    </location>
</feature>
<feature type="helix" evidence="7">
    <location>
        <begin position="43"/>
        <end position="46"/>
    </location>
</feature>
<feature type="helix" evidence="7">
    <location>
        <begin position="50"/>
        <end position="52"/>
    </location>
</feature>
<feature type="helix" evidence="7">
    <location>
        <begin position="53"/>
        <end position="86"/>
    </location>
</feature>
<feature type="turn" evidence="5">
    <location>
        <begin position="87"/>
        <end position="90"/>
    </location>
</feature>
<feature type="helix" evidence="7">
    <location>
        <begin position="108"/>
        <end position="121"/>
    </location>
</feature>
<feature type="turn" evidence="7">
    <location>
        <begin position="122"/>
        <end position="124"/>
    </location>
</feature>
<feature type="strand" evidence="7">
    <location>
        <begin position="132"/>
        <end position="135"/>
    </location>
</feature>
<feature type="helix" evidence="7">
    <location>
        <begin position="136"/>
        <end position="139"/>
    </location>
</feature>
<feature type="helix" evidence="7">
    <location>
        <begin position="141"/>
        <end position="143"/>
    </location>
</feature>
<feature type="strand" evidence="5">
    <location>
        <begin position="147"/>
        <end position="149"/>
    </location>
</feature>
<feature type="helix" evidence="7">
    <location>
        <begin position="150"/>
        <end position="153"/>
    </location>
</feature>
<feature type="strand" evidence="7">
    <location>
        <begin position="159"/>
        <end position="166"/>
    </location>
</feature>
<feature type="strand" evidence="6">
    <location>
        <begin position="168"/>
        <end position="170"/>
    </location>
</feature>
<feature type="helix" evidence="7">
    <location>
        <begin position="172"/>
        <end position="180"/>
    </location>
</feature>
<feature type="strand" evidence="7">
    <location>
        <begin position="185"/>
        <end position="194"/>
    </location>
</feature>
<feature type="strand" evidence="6">
    <location>
        <begin position="199"/>
        <end position="201"/>
    </location>
</feature>
<feature type="strand" evidence="7">
    <location>
        <begin position="204"/>
        <end position="217"/>
    </location>
</feature>
<feature type="helix" evidence="7">
    <location>
        <begin position="220"/>
        <end position="235"/>
    </location>
</feature>
<feature type="strand" evidence="7">
    <location>
        <begin position="241"/>
        <end position="248"/>
    </location>
</feature>
<feature type="strand" evidence="7">
    <location>
        <begin position="251"/>
        <end position="260"/>
    </location>
</feature>
<feature type="strand" evidence="7">
    <location>
        <begin position="264"/>
        <end position="275"/>
    </location>
</feature>
<feature type="helix" evidence="7">
    <location>
        <begin position="277"/>
        <end position="282"/>
    </location>
</feature>
<feature type="turn" evidence="7">
    <location>
        <begin position="287"/>
        <end position="289"/>
    </location>
</feature>
<feature type="strand" evidence="7">
    <location>
        <begin position="291"/>
        <end position="298"/>
    </location>
</feature>
<feature type="helix" evidence="7">
    <location>
        <begin position="299"/>
        <end position="307"/>
    </location>
</feature>
<feature type="helix" evidence="7">
    <location>
        <begin position="313"/>
        <end position="317"/>
    </location>
</feature>
<feature type="helix" evidence="7">
    <location>
        <begin position="320"/>
        <end position="323"/>
    </location>
</feature>
<feature type="helix" evidence="7">
    <location>
        <begin position="324"/>
        <end position="326"/>
    </location>
</feature>
<sequence>MSHLAELVASAKAAISQASDVAALDNVRVEYLGKKGHLTLQMTTLRELPPEERPAAGAVINEAKEQVQQALNARKAELESAALNARLAAETIDVSLPGRRIENGGLHPVTRTIDRIESFFGELGFTVATGPEIEDDYHNFDALNIPGHHPARADHDTFWFDTTRLLRTQTSGVQIRTMKAQQPPIRIIAPGRVYRNDYDQTHTPMFHQMEGLIVDTNISFTNLKGTLHDFLRNFFEEDLQIRFRPSYFPFTEPSAEVDVMGKNGKWLEVLGCGMVHPNVLRNVGIDPEVYSGFAFGMGMERLTMLRYGVTDLRSFFENDLRFLKQFK</sequence>
<reference key="1">
    <citation type="journal article" date="1983" name="J. Mol. Biol.">
        <title>Escherichia coli phenylalanyl-tRNA synthetase operon region. Evidence for an attenuation mechanism. Identification of the gene for the ribosomal protein L20.</title>
        <authorList>
            <person name="Fayat G."/>
            <person name="Mayaux J.-F."/>
            <person name="Sacerdot C."/>
            <person name="Fromant M."/>
            <person name="Springer M."/>
            <person name="Grunberg-Manago M."/>
            <person name="Blanquet S."/>
        </authorList>
    </citation>
    <scope>NUCLEOTIDE SEQUENCE [GENOMIC DNA]</scope>
</reference>
<reference key="2">
    <citation type="submission" date="1986-11" db="EMBL/GenBank/DDBJ databases">
        <authorList>
            <person name="Miller H.I."/>
        </authorList>
    </citation>
    <scope>NUCLEOTIDE SEQUENCE [GENOMIC DNA]</scope>
</reference>
<reference key="3">
    <citation type="journal article" date="1996" name="DNA Res.">
        <title>A 570-kb DNA sequence of the Escherichia coli K-12 genome corresponding to the 28.0-40.1 min region on the linkage map.</title>
        <authorList>
            <person name="Aiba H."/>
            <person name="Baba T."/>
            <person name="Fujita K."/>
            <person name="Hayashi K."/>
            <person name="Inada T."/>
            <person name="Isono K."/>
            <person name="Itoh T."/>
            <person name="Kasai H."/>
            <person name="Kashimoto K."/>
            <person name="Kimura S."/>
            <person name="Kitakawa M."/>
            <person name="Kitagawa M."/>
            <person name="Makino K."/>
            <person name="Miki T."/>
            <person name="Mizobuchi K."/>
            <person name="Mori H."/>
            <person name="Mori T."/>
            <person name="Motomura K."/>
            <person name="Nakade S."/>
            <person name="Nakamura Y."/>
            <person name="Nashimoto H."/>
            <person name="Nishio Y."/>
            <person name="Oshima T."/>
            <person name="Saito N."/>
            <person name="Sampei G."/>
            <person name="Seki Y."/>
            <person name="Sivasundaram S."/>
            <person name="Tagami H."/>
            <person name="Takeda J."/>
            <person name="Takemoto K."/>
            <person name="Takeuchi Y."/>
            <person name="Wada C."/>
            <person name="Yamamoto Y."/>
            <person name="Horiuchi T."/>
        </authorList>
    </citation>
    <scope>NUCLEOTIDE SEQUENCE [LARGE SCALE GENOMIC DNA]</scope>
    <source>
        <strain>K12 / W3110 / ATCC 27325 / DSM 5911</strain>
    </source>
</reference>
<reference key="4">
    <citation type="journal article" date="1997" name="Science">
        <title>The complete genome sequence of Escherichia coli K-12.</title>
        <authorList>
            <person name="Blattner F.R."/>
            <person name="Plunkett G. III"/>
            <person name="Bloch C.A."/>
            <person name="Perna N.T."/>
            <person name="Burland V."/>
            <person name="Riley M."/>
            <person name="Collado-Vides J."/>
            <person name="Glasner J.D."/>
            <person name="Rode C.K."/>
            <person name="Mayhew G.F."/>
            <person name="Gregor J."/>
            <person name="Davis N.W."/>
            <person name="Kirkpatrick H.A."/>
            <person name="Goeden M.A."/>
            <person name="Rose D.J."/>
            <person name="Mau B."/>
            <person name="Shao Y."/>
        </authorList>
    </citation>
    <scope>NUCLEOTIDE SEQUENCE [LARGE SCALE GENOMIC DNA]</scope>
    <source>
        <strain>K12 / MG1655 / ATCC 47076</strain>
    </source>
</reference>
<reference key="5">
    <citation type="journal article" date="2006" name="Mol. Syst. Biol.">
        <title>Highly accurate genome sequences of Escherichia coli K-12 strains MG1655 and W3110.</title>
        <authorList>
            <person name="Hayashi K."/>
            <person name="Morooka N."/>
            <person name="Yamamoto Y."/>
            <person name="Fujita K."/>
            <person name="Isono K."/>
            <person name="Choi S."/>
            <person name="Ohtsubo E."/>
            <person name="Baba T."/>
            <person name="Wanner B.L."/>
            <person name="Mori H."/>
            <person name="Horiuchi T."/>
        </authorList>
    </citation>
    <scope>NUCLEOTIDE SEQUENCE [LARGE SCALE GENOMIC DNA]</scope>
    <source>
        <strain>K12 / W3110 / ATCC 27325 / DSM 5911</strain>
    </source>
</reference>
<reference key="6">
    <citation type="journal article" date="1985" name="J. Bacteriol.">
        <title>Sequence of the Escherichia coli pheST operon and identification of the himA gene.</title>
        <authorList>
            <person name="Mechulman Y."/>
            <person name="Fayat G."/>
            <person name="Blanquet S."/>
        </authorList>
    </citation>
    <scope>NUCLEOTIDE SEQUENCE [GENOMIC DNA] OF 254-327</scope>
</reference>
<reference key="7">
    <citation type="journal article" date="1991" name="J. Mol. Biol.">
        <title>Amino acid substrate specificity of Escherichia coli phenylalanyl-tRNA synthetase altered by distinct mutations.</title>
        <authorList>
            <person name="Kast P."/>
            <person name="Hennecke H."/>
        </authorList>
    </citation>
    <scope>SEQUENCE REVISION TO 74</scope>
    <scope>MUTAGENESIS OF ALA-294</scope>
</reference>
<reference key="8">
    <citation type="journal article" date="1997" name="Electrophoresis">
        <title>Escherichia coli proteome analysis using the gene-protein database.</title>
        <authorList>
            <person name="VanBogelen R.A."/>
            <person name="Abshire K.Z."/>
            <person name="Moldover B."/>
            <person name="Olson E.R."/>
            <person name="Neidhardt F.C."/>
        </authorList>
    </citation>
    <scope>IDENTIFICATION BY 2D-GEL</scope>
</reference>
<reference key="9">
    <citation type="journal article" date="1991" name="FEBS Lett.">
        <title>Impaired affinity for phenylalanine in Escherichia coli phenylalanyl-tRNA synthetase mutant caused by Gly-to-Asp exchange in motif 2 of class II tRNA synthetases.</title>
        <authorList>
            <person name="Kast P."/>
            <person name="Wehrli C."/>
            <person name="Hennecke H."/>
        </authorList>
    </citation>
    <scope>VARIANT ASP-191</scope>
</reference>
<reference key="10">
    <citation type="journal article" date="1992" name="J. Bacteriol.">
        <title>Identification of the pheS5 mutation, which causes thermosensitivity of Escherichia coli mutant NP37.</title>
        <authorList>
            <person name="Kast P."/>
            <person name="Keller B."/>
            <person name="Hennecke H."/>
        </authorList>
    </citation>
    <scope>VARIANT PHES5 ASP-98</scope>
</reference>
<proteinExistence type="evidence at protein level"/>
<accession>P08312</accession>
<accession>P78233</accession>
<accession>Q59406</accession>
<comment type="catalytic activity">
    <reaction>
        <text>tRNA(Phe) + L-phenylalanine + ATP = L-phenylalanyl-tRNA(Phe) + AMP + diphosphate + H(+)</text>
        <dbReference type="Rhea" id="RHEA:19413"/>
        <dbReference type="Rhea" id="RHEA-COMP:9668"/>
        <dbReference type="Rhea" id="RHEA-COMP:9699"/>
        <dbReference type="ChEBI" id="CHEBI:15378"/>
        <dbReference type="ChEBI" id="CHEBI:30616"/>
        <dbReference type="ChEBI" id="CHEBI:33019"/>
        <dbReference type="ChEBI" id="CHEBI:58095"/>
        <dbReference type="ChEBI" id="CHEBI:78442"/>
        <dbReference type="ChEBI" id="CHEBI:78531"/>
        <dbReference type="ChEBI" id="CHEBI:456215"/>
        <dbReference type="EC" id="6.1.1.20"/>
    </reaction>
</comment>
<comment type="cofactor">
    <cofactor evidence="1">
        <name>Mg(2+)</name>
        <dbReference type="ChEBI" id="CHEBI:18420"/>
    </cofactor>
    <text evidence="1">Binds 2 magnesium ions per tetramer.</text>
</comment>
<comment type="subunit">
    <text>Tetramer of two alpha and two beta subunits.</text>
</comment>
<comment type="interaction">
    <interactant intactId="EBI-555676">
        <id>P08312</id>
    </interactant>
    <interactant intactId="EBI-555687">
        <id>P0AD99</id>
        <label>brnQ</label>
    </interactant>
    <organismsDiffer>false</organismsDiffer>
    <experiments>5</experiments>
</comment>
<comment type="interaction">
    <interactant intactId="EBI-555676">
        <id>P08312</id>
    </interactant>
    <interactant intactId="EBI-555707">
        <id>P39176</id>
        <label>erfK</label>
    </interactant>
    <organismsDiffer>false</organismsDiffer>
    <experiments>4</experiments>
</comment>
<comment type="interaction">
    <interactant intactId="EBI-555676">
        <id>P08312</id>
    </interactant>
    <interactant intactId="EBI-555713">
        <id>P07395</id>
        <label>pheT</label>
    </interactant>
    <organismsDiffer>false</organismsDiffer>
    <experiments>9</experiments>
</comment>
<comment type="subcellular location">
    <subcellularLocation>
        <location>Cytoplasm</location>
    </subcellularLocation>
</comment>
<comment type="similarity">
    <text evidence="4">Belongs to the class-II aminoacyl-tRNA synthetase family. Phe-tRNA synthetase alpha subunit type 1 subfamily.</text>
</comment>
<comment type="sequence caution" evidence="4">
    <conflict type="erroneous initiation">
        <sequence resource="EMBL-CDS" id="CAA23564"/>
    </conflict>
</comment>
<evidence type="ECO:0000250" key="1"/>
<evidence type="ECO:0000269" key="2">
    <source>
    </source>
</evidence>
<evidence type="ECO:0000269" key="3">
    <source>
    </source>
</evidence>
<evidence type="ECO:0000305" key="4"/>
<evidence type="ECO:0007829" key="5">
    <source>
        <dbReference type="PDB" id="3PCO"/>
    </source>
</evidence>
<evidence type="ECO:0007829" key="6">
    <source>
        <dbReference type="PDB" id="6OZ5"/>
    </source>
</evidence>
<evidence type="ECO:0007829" key="7">
    <source>
        <dbReference type="PDB" id="6P24"/>
    </source>
</evidence>
<dbReference type="EC" id="6.1.1.20"/>
<dbReference type="EMBL" id="V00291">
    <property type="protein sequence ID" value="CAA23564.1"/>
    <property type="status" value="ALT_INIT"/>
    <property type="molecule type" value="Genomic_DNA"/>
</dbReference>
<dbReference type="EMBL" id="K02844">
    <property type="protein sequence ID" value="AAA51469.1"/>
    <property type="molecule type" value="Genomic_DNA"/>
</dbReference>
<dbReference type="EMBL" id="U00096">
    <property type="protein sequence ID" value="AAC74784.1"/>
    <property type="molecule type" value="Genomic_DNA"/>
</dbReference>
<dbReference type="EMBL" id="AP009048">
    <property type="protein sequence ID" value="BAA15482.2"/>
    <property type="molecule type" value="Genomic_DNA"/>
</dbReference>
<dbReference type="PIR" id="B64930">
    <property type="entry name" value="SYECFA"/>
</dbReference>
<dbReference type="RefSeq" id="NP_416229.1">
    <property type="nucleotide sequence ID" value="NC_000913.3"/>
</dbReference>
<dbReference type="RefSeq" id="WP_000018596.1">
    <property type="nucleotide sequence ID" value="NZ_STEB01000009.1"/>
</dbReference>
<dbReference type="PDB" id="3PCO">
    <property type="method" value="X-ray"/>
    <property type="resolution" value="3.02 A"/>
    <property type="chains" value="A/C=1-327"/>
</dbReference>
<dbReference type="PDB" id="6OZ5">
    <property type="method" value="X-ray"/>
    <property type="resolution" value="2.50 A"/>
    <property type="chains" value="A/C=2-327"/>
</dbReference>
<dbReference type="PDB" id="6P24">
    <property type="method" value="X-ray"/>
    <property type="resolution" value="2.12 A"/>
    <property type="chains" value="A/C=2-327"/>
</dbReference>
<dbReference type="PDB" id="6P26">
    <property type="method" value="X-ray"/>
    <property type="resolution" value="3.16 A"/>
    <property type="chains" value="A/C=2-327"/>
</dbReference>
<dbReference type="PDBsum" id="3PCO"/>
<dbReference type="PDBsum" id="6OZ5"/>
<dbReference type="PDBsum" id="6P24"/>
<dbReference type="PDBsum" id="6P26"/>
<dbReference type="SMR" id="P08312"/>
<dbReference type="BioGRID" id="4260287">
    <property type="interactions" value="275"/>
</dbReference>
<dbReference type="BioGRID" id="850583">
    <property type="interactions" value="9"/>
</dbReference>
<dbReference type="ComplexPortal" id="CPX-5222">
    <property type="entry name" value="Phenylalanyl-tRNA synthetase complex"/>
</dbReference>
<dbReference type="DIP" id="DIP-6878N"/>
<dbReference type="FunCoup" id="P08312">
    <property type="interactions" value="808"/>
</dbReference>
<dbReference type="IntAct" id="P08312">
    <property type="interactions" value="7"/>
</dbReference>
<dbReference type="STRING" id="511145.b1714"/>
<dbReference type="BindingDB" id="P08312"/>
<dbReference type="DrugCentral" id="P08312"/>
<dbReference type="jPOST" id="P08312"/>
<dbReference type="PaxDb" id="511145-b1714"/>
<dbReference type="EnsemblBacteria" id="AAC74784">
    <property type="protein sequence ID" value="AAC74784"/>
    <property type="gene ID" value="b1714"/>
</dbReference>
<dbReference type="GeneID" id="75205640"/>
<dbReference type="GeneID" id="946223"/>
<dbReference type="KEGG" id="ecj:JW5277"/>
<dbReference type="KEGG" id="eco:b1714"/>
<dbReference type="KEGG" id="ecoc:C3026_09810"/>
<dbReference type="PATRIC" id="fig|1411691.4.peg.543"/>
<dbReference type="EchoBASE" id="EB0703"/>
<dbReference type="eggNOG" id="COG0016">
    <property type="taxonomic scope" value="Bacteria"/>
</dbReference>
<dbReference type="HOGENOM" id="CLU_025086_0_1_6"/>
<dbReference type="InParanoid" id="P08312"/>
<dbReference type="OMA" id="EIMGCGM"/>
<dbReference type="OrthoDB" id="9800719at2"/>
<dbReference type="PhylomeDB" id="P08312"/>
<dbReference type="BioCyc" id="EcoCyc:PHES-MONOMER"/>
<dbReference type="BioCyc" id="MetaCyc:PHES-MONOMER"/>
<dbReference type="BRENDA" id="6.1.1.20">
    <property type="organism ID" value="2026"/>
</dbReference>
<dbReference type="SABIO-RK" id="P08312"/>
<dbReference type="EvolutionaryTrace" id="P08312"/>
<dbReference type="PRO" id="PR:P08312"/>
<dbReference type="Proteomes" id="UP000000625">
    <property type="component" value="Chromosome"/>
</dbReference>
<dbReference type="GO" id="GO:0005737">
    <property type="term" value="C:cytoplasm"/>
    <property type="evidence" value="ECO:0007005"/>
    <property type="project" value="UniProtKB"/>
</dbReference>
<dbReference type="GO" id="GO:0005829">
    <property type="term" value="C:cytosol"/>
    <property type="evidence" value="ECO:0000314"/>
    <property type="project" value="EcoCyc"/>
</dbReference>
<dbReference type="GO" id="GO:0009328">
    <property type="term" value="C:phenylalanine-tRNA ligase complex"/>
    <property type="evidence" value="ECO:0000314"/>
    <property type="project" value="EcoCyc"/>
</dbReference>
<dbReference type="GO" id="GO:0005524">
    <property type="term" value="F:ATP binding"/>
    <property type="evidence" value="ECO:0007669"/>
    <property type="project" value="UniProtKB-UniRule"/>
</dbReference>
<dbReference type="GO" id="GO:0000287">
    <property type="term" value="F:magnesium ion binding"/>
    <property type="evidence" value="ECO:0007669"/>
    <property type="project" value="UniProtKB-UniRule"/>
</dbReference>
<dbReference type="GO" id="GO:0004826">
    <property type="term" value="F:phenylalanine-tRNA ligase activity"/>
    <property type="evidence" value="ECO:0000318"/>
    <property type="project" value="GO_Central"/>
</dbReference>
<dbReference type="GO" id="GO:0000049">
    <property type="term" value="F:tRNA binding"/>
    <property type="evidence" value="ECO:0007669"/>
    <property type="project" value="InterPro"/>
</dbReference>
<dbReference type="GO" id="GO:0006432">
    <property type="term" value="P:phenylalanyl-tRNA aminoacylation"/>
    <property type="evidence" value="ECO:0000314"/>
    <property type="project" value="ComplexPortal"/>
</dbReference>
<dbReference type="CDD" id="cd00496">
    <property type="entry name" value="PheRS_alpha_core"/>
    <property type="match status" value="1"/>
</dbReference>
<dbReference type="FunFam" id="3.30.930.10:FF:000003">
    <property type="entry name" value="Phenylalanine--tRNA ligase alpha subunit"/>
    <property type="match status" value="1"/>
</dbReference>
<dbReference type="Gene3D" id="3.30.930.10">
    <property type="entry name" value="Bira Bifunctional Protein, Domain 2"/>
    <property type="match status" value="1"/>
</dbReference>
<dbReference type="HAMAP" id="MF_00281">
    <property type="entry name" value="Phe_tRNA_synth_alpha1"/>
    <property type="match status" value="1"/>
</dbReference>
<dbReference type="InterPro" id="IPR006195">
    <property type="entry name" value="aa-tRNA-synth_II"/>
</dbReference>
<dbReference type="InterPro" id="IPR045864">
    <property type="entry name" value="aa-tRNA-synth_II/BPL/LPL"/>
</dbReference>
<dbReference type="InterPro" id="IPR004529">
    <property type="entry name" value="Phe-tRNA-synth_IIc_asu"/>
</dbReference>
<dbReference type="InterPro" id="IPR004188">
    <property type="entry name" value="Phe-tRNA_ligase_II_N"/>
</dbReference>
<dbReference type="InterPro" id="IPR022911">
    <property type="entry name" value="Phe_tRNA_ligase_alpha1_bac"/>
</dbReference>
<dbReference type="InterPro" id="IPR002319">
    <property type="entry name" value="Phenylalanyl-tRNA_Synthase"/>
</dbReference>
<dbReference type="InterPro" id="IPR010978">
    <property type="entry name" value="tRNA-bd_arm"/>
</dbReference>
<dbReference type="NCBIfam" id="TIGR00468">
    <property type="entry name" value="pheS"/>
    <property type="match status" value="1"/>
</dbReference>
<dbReference type="PANTHER" id="PTHR11538:SF41">
    <property type="entry name" value="PHENYLALANINE--TRNA LIGASE, MITOCHONDRIAL"/>
    <property type="match status" value="1"/>
</dbReference>
<dbReference type="PANTHER" id="PTHR11538">
    <property type="entry name" value="PHENYLALANYL-TRNA SYNTHETASE"/>
    <property type="match status" value="1"/>
</dbReference>
<dbReference type="Pfam" id="PF02912">
    <property type="entry name" value="Phe_tRNA-synt_N"/>
    <property type="match status" value="1"/>
</dbReference>
<dbReference type="Pfam" id="PF01409">
    <property type="entry name" value="tRNA-synt_2d"/>
    <property type="match status" value="1"/>
</dbReference>
<dbReference type="SUPFAM" id="SSF55681">
    <property type="entry name" value="Class II aaRS and biotin synthetases"/>
    <property type="match status" value="1"/>
</dbReference>
<dbReference type="SUPFAM" id="SSF46589">
    <property type="entry name" value="tRNA-binding arm"/>
    <property type="match status" value="1"/>
</dbReference>
<dbReference type="PROSITE" id="PS50862">
    <property type="entry name" value="AA_TRNA_LIGASE_II"/>
    <property type="match status" value="1"/>
</dbReference>
<name>SYFA_ECOLI</name>
<protein>
    <recommendedName>
        <fullName>Phenylalanine--tRNA ligase alpha subunit</fullName>
        <ecNumber>6.1.1.20</ecNumber>
    </recommendedName>
    <alternativeName>
        <fullName>Phenylalanyl-tRNA synthetase alpha subunit</fullName>
        <shortName>PheRS</shortName>
    </alternativeName>
</protein>
<organism>
    <name type="scientific">Escherichia coli (strain K12)</name>
    <dbReference type="NCBI Taxonomy" id="83333"/>
    <lineage>
        <taxon>Bacteria</taxon>
        <taxon>Pseudomonadati</taxon>
        <taxon>Pseudomonadota</taxon>
        <taxon>Gammaproteobacteria</taxon>
        <taxon>Enterobacterales</taxon>
        <taxon>Enterobacteriaceae</taxon>
        <taxon>Escherichia</taxon>
    </lineage>
</organism>